<organism>
    <name type="scientific">Xylella fastidiosa (strain Temecula1 / ATCC 700964)</name>
    <dbReference type="NCBI Taxonomy" id="183190"/>
    <lineage>
        <taxon>Bacteria</taxon>
        <taxon>Pseudomonadati</taxon>
        <taxon>Pseudomonadota</taxon>
        <taxon>Gammaproteobacteria</taxon>
        <taxon>Lysobacterales</taxon>
        <taxon>Lysobacteraceae</taxon>
        <taxon>Xylella</taxon>
    </lineage>
</organism>
<comment type="function">
    <text evidence="1">This is one of the proteins that bind and probably mediate the attachment of the 5S RNA into the large ribosomal subunit, where it forms part of the central protuberance.</text>
</comment>
<comment type="subunit">
    <text evidence="1">Part of the 50S ribosomal subunit; part of the 5S rRNA/L5/L18/L25 subcomplex. Contacts the 5S and 23S rRNAs.</text>
</comment>
<comment type="similarity">
    <text evidence="1">Belongs to the universal ribosomal protein uL18 family.</text>
</comment>
<evidence type="ECO:0000255" key="1">
    <source>
        <dbReference type="HAMAP-Rule" id="MF_01337"/>
    </source>
</evidence>
<evidence type="ECO:0000305" key="2"/>
<protein>
    <recommendedName>
        <fullName evidence="1">Large ribosomal subunit protein uL18</fullName>
    </recommendedName>
    <alternativeName>
        <fullName evidence="2">50S ribosomal protein L18</fullName>
    </alternativeName>
</protein>
<accession>Q87E66</accession>
<sequence length="119" mass="12920">MSIGKNVARLRRAKSTRLHIRKLGVPRLSVLRTGRHLYAQIFTADGSKVIAAANTLQSQVKGGLKNGKNSLAAIKVGKLIAERARAVGVDRIAFDRSGYLYHGRIKILADAARDAGLKF</sequence>
<feature type="chain" id="PRO_0000131394" description="Large ribosomal subunit protein uL18">
    <location>
        <begin position="1"/>
        <end position="119"/>
    </location>
</feature>
<gene>
    <name evidence="1" type="primary">rplR</name>
    <name type="ordered locus">PD_0453</name>
</gene>
<reference key="1">
    <citation type="journal article" date="2003" name="J. Bacteriol.">
        <title>Comparative analyses of the complete genome sequences of Pierce's disease and citrus variegated chlorosis strains of Xylella fastidiosa.</title>
        <authorList>
            <person name="Van Sluys M.A."/>
            <person name="de Oliveira M.C."/>
            <person name="Monteiro-Vitorello C.B."/>
            <person name="Miyaki C.Y."/>
            <person name="Furlan L.R."/>
            <person name="Camargo L.E.A."/>
            <person name="da Silva A.C.R."/>
            <person name="Moon D.H."/>
            <person name="Takita M.A."/>
            <person name="Lemos E.G.M."/>
            <person name="Machado M.A."/>
            <person name="Ferro M.I.T."/>
            <person name="da Silva F.R."/>
            <person name="Goldman M.H.S."/>
            <person name="Goldman G.H."/>
            <person name="Lemos M.V.F."/>
            <person name="El-Dorry H."/>
            <person name="Tsai S.M."/>
            <person name="Carrer H."/>
            <person name="Carraro D.M."/>
            <person name="de Oliveira R.C."/>
            <person name="Nunes L.R."/>
            <person name="Siqueira W.J."/>
            <person name="Coutinho L.L."/>
            <person name="Kimura E.T."/>
            <person name="Ferro E.S."/>
            <person name="Harakava R."/>
            <person name="Kuramae E.E."/>
            <person name="Marino C.L."/>
            <person name="Giglioti E."/>
            <person name="Abreu I.L."/>
            <person name="Alves L.M.C."/>
            <person name="do Amaral A.M."/>
            <person name="Baia G.S."/>
            <person name="Blanco S.R."/>
            <person name="Brito M.S."/>
            <person name="Cannavan F.S."/>
            <person name="Celestino A.V."/>
            <person name="da Cunha A.F."/>
            <person name="Fenille R.C."/>
            <person name="Ferro J.A."/>
            <person name="Formighieri E.F."/>
            <person name="Kishi L.T."/>
            <person name="Leoni S.G."/>
            <person name="Oliveira A.R."/>
            <person name="Rosa V.E. Jr."/>
            <person name="Sassaki F.T."/>
            <person name="Sena J.A.D."/>
            <person name="de Souza A.A."/>
            <person name="Truffi D."/>
            <person name="Tsukumo F."/>
            <person name="Yanai G.M."/>
            <person name="Zaros L.G."/>
            <person name="Civerolo E.L."/>
            <person name="Simpson A.J.G."/>
            <person name="Almeida N.F. Jr."/>
            <person name="Setubal J.C."/>
            <person name="Kitajima J.P."/>
        </authorList>
    </citation>
    <scope>NUCLEOTIDE SEQUENCE [LARGE SCALE GENOMIC DNA]</scope>
    <source>
        <strain>Temecula1 / ATCC 700964</strain>
    </source>
</reference>
<name>RL18_XYLFT</name>
<keyword id="KW-1185">Reference proteome</keyword>
<keyword id="KW-0687">Ribonucleoprotein</keyword>
<keyword id="KW-0689">Ribosomal protein</keyword>
<keyword id="KW-0694">RNA-binding</keyword>
<keyword id="KW-0699">rRNA-binding</keyword>
<proteinExistence type="inferred from homology"/>
<dbReference type="EMBL" id="AE009442">
    <property type="protein sequence ID" value="AAO28332.1"/>
    <property type="molecule type" value="Genomic_DNA"/>
</dbReference>
<dbReference type="RefSeq" id="WP_004090124.1">
    <property type="nucleotide sequence ID" value="NC_004556.1"/>
</dbReference>
<dbReference type="SMR" id="Q87E66"/>
<dbReference type="GeneID" id="93904155"/>
<dbReference type="KEGG" id="xft:PD_0453"/>
<dbReference type="HOGENOM" id="CLU_098841_0_1_6"/>
<dbReference type="Proteomes" id="UP000002516">
    <property type="component" value="Chromosome"/>
</dbReference>
<dbReference type="GO" id="GO:0022625">
    <property type="term" value="C:cytosolic large ribosomal subunit"/>
    <property type="evidence" value="ECO:0007669"/>
    <property type="project" value="TreeGrafter"/>
</dbReference>
<dbReference type="GO" id="GO:0008097">
    <property type="term" value="F:5S rRNA binding"/>
    <property type="evidence" value="ECO:0007669"/>
    <property type="project" value="TreeGrafter"/>
</dbReference>
<dbReference type="GO" id="GO:0003735">
    <property type="term" value="F:structural constituent of ribosome"/>
    <property type="evidence" value="ECO:0007669"/>
    <property type="project" value="InterPro"/>
</dbReference>
<dbReference type="GO" id="GO:0006412">
    <property type="term" value="P:translation"/>
    <property type="evidence" value="ECO:0007669"/>
    <property type="project" value="UniProtKB-UniRule"/>
</dbReference>
<dbReference type="CDD" id="cd00432">
    <property type="entry name" value="Ribosomal_L18_L5e"/>
    <property type="match status" value="1"/>
</dbReference>
<dbReference type="FunFam" id="3.30.420.100:FF:000001">
    <property type="entry name" value="50S ribosomal protein L18"/>
    <property type="match status" value="1"/>
</dbReference>
<dbReference type="Gene3D" id="3.30.420.100">
    <property type="match status" value="1"/>
</dbReference>
<dbReference type="HAMAP" id="MF_01337_B">
    <property type="entry name" value="Ribosomal_uL18_B"/>
    <property type="match status" value="1"/>
</dbReference>
<dbReference type="InterPro" id="IPR004389">
    <property type="entry name" value="Ribosomal_uL18_bac-type"/>
</dbReference>
<dbReference type="InterPro" id="IPR005484">
    <property type="entry name" value="Ribosomal_uL18_bac/euk"/>
</dbReference>
<dbReference type="NCBIfam" id="TIGR00060">
    <property type="entry name" value="L18_bact"/>
    <property type="match status" value="1"/>
</dbReference>
<dbReference type="PANTHER" id="PTHR12899">
    <property type="entry name" value="39S RIBOSOMAL PROTEIN L18, MITOCHONDRIAL"/>
    <property type="match status" value="1"/>
</dbReference>
<dbReference type="PANTHER" id="PTHR12899:SF3">
    <property type="entry name" value="LARGE RIBOSOMAL SUBUNIT PROTEIN UL18M"/>
    <property type="match status" value="1"/>
</dbReference>
<dbReference type="Pfam" id="PF00861">
    <property type="entry name" value="Ribosomal_L18p"/>
    <property type="match status" value="1"/>
</dbReference>
<dbReference type="SUPFAM" id="SSF53137">
    <property type="entry name" value="Translational machinery components"/>
    <property type="match status" value="1"/>
</dbReference>